<keyword id="KW-0997">Cell inner membrane</keyword>
<keyword id="KW-1003">Cell membrane</keyword>
<keyword id="KW-0133">Cell shape</keyword>
<keyword id="KW-0238">DNA-binding</keyword>
<keyword id="KW-0472">Membrane</keyword>
<keyword id="KW-1185">Reference proteome</keyword>
<keyword id="KW-0735">Signal-anchor</keyword>
<keyword id="KW-0812">Transmembrane</keyword>
<keyword id="KW-1133">Transmembrane helix</keyword>
<protein>
    <recommendedName>
        <fullName evidence="1">Cytoskeleton protein RodZ</fullName>
    </recommendedName>
</protein>
<accession>A7MGV6</accession>
<comment type="function">
    <text evidence="1">Cytoskeletal protein that is involved in cell-shape control through regulation of the length of the long axis.</text>
</comment>
<comment type="subcellular location">
    <subcellularLocation>
        <location evidence="1">Cell inner membrane</location>
        <topology evidence="1">Single-pass type II membrane protein</topology>
    </subcellularLocation>
    <text evidence="1">Forms helical filaments along the long axis of the cell.</text>
</comment>
<comment type="domain">
    <text evidence="1">The helix-turn-helix (HTH) motif in the cytoplasmic domain of the N-terminus is involved in the formation of spirals to maintain the rigid rod shape. As this protein is anchored in the cytoplasmic membrane, the HTH motif may contribute to protein-protein interactions to form the RodZ helix, which is localized beneath the cytoplasmic membrane. The C-terminal domain may be critical for determination of the rod shape by probably interacting with enzymes required for synthesis of the peptidoglycan layer, including PBPs in the periplasm.</text>
</comment>
<comment type="similarity">
    <text evidence="1">Belongs to the RodZ family.</text>
</comment>
<organism>
    <name type="scientific">Cronobacter sakazakii (strain ATCC BAA-894)</name>
    <name type="common">Enterobacter sakazakii</name>
    <dbReference type="NCBI Taxonomy" id="290339"/>
    <lineage>
        <taxon>Bacteria</taxon>
        <taxon>Pseudomonadati</taxon>
        <taxon>Pseudomonadota</taxon>
        <taxon>Gammaproteobacteria</taxon>
        <taxon>Enterobacterales</taxon>
        <taxon>Enterobacteriaceae</taxon>
        <taxon>Cronobacter</taxon>
    </lineage>
</organism>
<evidence type="ECO:0000255" key="1">
    <source>
        <dbReference type="HAMAP-Rule" id="MF_02017"/>
    </source>
</evidence>
<evidence type="ECO:0000256" key="2">
    <source>
        <dbReference type="SAM" id="MobiDB-lite"/>
    </source>
</evidence>
<name>RODZ_CROS8</name>
<reference key="1">
    <citation type="journal article" date="2010" name="PLoS ONE">
        <title>Genome sequence of Cronobacter sakazakii BAA-894 and comparative genomic hybridization analysis with other Cronobacter species.</title>
        <authorList>
            <person name="Kucerova E."/>
            <person name="Clifton S.W."/>
            <person name="Xia X.Q."/>
            <person name="Long F."/>
            <person name="Porwollik S."/>
            <person name="Fulton L."/>
            <person name="Fronick C."/>
            <person name="Minx P."/>
            <person name="Kyung K."/>
            <person name="Warren W."/>
            <person name="Fulton R."/>
            <person name="Feng D."/>
            <person name="Wollam A."/>
            <person name="Shah N."/>
            <person name="Bhonagiri V."/>
            <person name="Nash W.E."/>
            <person name="Hallsworth-Pepin K."/>
            <person name="Wilson R.K."/>
            <person name="McClelland M."/>
            <person name="Forsythe S.J."/>
        </authorList>
    </citation>
    <scope>NUCLEOTIDE SEQUENCE [LARGE SCALE GENOMIC DNA]</scope>
    <source>
        <strain>ATCC BAA-894</strain>
    </source>
</reference>
<proteinExistence type="inferred from homology"/>
<sequence>MNTEATHEENAPHTTGERLRLAREQLGLSQQVVAERLCLKVSTVRDIEEDKAPADLASTFLRGYIRSYARLVHVPEEELLPMLAKQAPVRTAQVAPMQTYALGKSRKKRDGWLMSFTWLVLFVVVGLTGAWWWQNHKAQQEEISTMADQSSAELSQNAANSPQSVPLNTDNTADASQDQATPPADLPSGDTQNTASNNPQPTPVPSSNTASQQPVVVPPSQANTDTAAQQNTTQPAQSQLPVGQASTAPAADANALVMNFTADCWLEVTDATGKKLFSGLQRKDTNLNLSGQAPYRLKIGAPSAVQIQYQGKPVDLSRFIRTNQVARLTLNAEQSVTQ</sequence>
<gene>
    <name evidence="1" type="primary">rodZ</name>
    <name type="ordered locus">ESA_00744</name>
</gene>
<feature type="chain" id="PRO_0000361830" description="Cytoskeleton protein RodZ">
    <location>
        <begin position="1"/>
        <end position="338"/>
    </location>
</feature>
<feature type="topological domain" description="Cytoplasmic" evidence="1">
    <location>
        <begin position="1"/>
        <end position="111"/>
    </location>
</feature>
<feature type="transmembrane region" description="Helical; Signal-anchor for type II membrane protein" evidence="1">
    <location>
        <begin position="112"/>
        <end position="132"/>
    </location>
</feature>
<feature type="topological domain" description="Periplasmic" evidence="1">
    <location>
        <begin position="133"/>
        <end position="338"/>
    </location>
</feature>
<feature type="domain" description="HTH cro/C1-type" evidence="1">
    <location>
        <begin position="19"/>
        <end position="71"/>
    </location>
</feature>
<feature type="DNA-binding region" description="H-T-H motif" evidence="1">
    <location>
        <begin position="30"/>
        <end position="49"/>
    </location>
</feature>
<feature type="region of interest" description="Disordered" evidence="2">
    <location>
        <begin position="147"/>
        <end position="245"/>
    </location>
</feature>
<feature type="compositionally biased region" description="Polar residues" evidence="2">
    <location>
        <begin position="147"/>
        <end position="180"/>
    </location>
</feature>
<feature type="compositionally biased region" description="Polar residues" evidence="2">
    <location>
        <begin position="189"/>
        <end position="214"/>
    </location>
</feature>
<feature type="compositionally biased region" description="Low complexity" evidence="2">
    <location>
        <begin position="220"/>
        <end position="239"/>
    </location>
</feature>
<dbReference type="EMBL" id="CP000783">
    <property type="protein sequence ID" value="ABU76021.1"/>
    <property type="molecule type" value="Genomic_DNA"/>
</dbReference>
<dbReference type="RefSeq" id="WP_012124051.1">
    <property type="nucleotide sequence ID" value="NC_009778.1"/>
</dbReference>
<dbReference type="SMR" id="A7MGV6"/>
<dbReference type="KEGG" id="esa:ESA_00744"/>
<dbReference type="PATRIC" id="fig|290339.8.peg.657"/>
<dbReference type="HOGENOM" id="CLU_047530_3_1_6"/>
<dbReference type="Proteomes" id="UP000000260">
    <property type="component" value="Chromosome"/>
</dbReference>
<dbReference type="GO" id="GO:0005886">
    <property type="term" value="C:plasma membrane"/>
    <property type="evidence" value="ECO:0007669"/>
    <property type="project" value="UniProtKB-SubCell"/>
</dbReference>
<dbReference type="GO" id="GO:0003677">
    <property type="term" value="F:DNA binding"/>
    <property type="evidence" value="ECO:0007669"/>
    <property type="project" value="UniProtKB-KW"/>
</dbReference>
<dbReference type="GO" id="GO:0008360">
    <property type="term" value="P:regulation of cell shape"/>
    <property type="evidence" value="ECO:0007669"/>
    <property type="project" value="UniProtKB-UniRule"/>
</dbReference>
<dbReference type="CDD" id="cd00093">
    <property type="entry name" value="HTH_XRE"/>
    <property type="match status" value="1"/>
</dbReference>
<dbReference type="Gene3D" id="1.10.260.40">
    <property type="entry name" value="lambda repressor-like DNA-binding domains"/>
    <property type="match status" value="1"/>
</dbReference>
<dbReference type="HAMAP" id="MF_02017">
    <property type="entry name" value="RodZ"/>
    <property type="match status" value="1"/>
</dbReference>
<dbReference type="InterPro" id="IPR050400">
    <property type="entry name" value="Bact_Cytoskel_RodZ"/>
</dbReference>
<dbReference type="InterPro" id="IPR001387">
    <property type="entry name" value="Cro/C1-type_HTH"/>
</dbReference>
<dbReference type="InterPro" id="IPR010982">
    <property type="entry name" value="Lambda_DNA-bd_dom_sf"/>
</dbReference>
<dbReference type="InterPro" id="IPR023690">
    <property type="entry name" value="RodZ"/>
</dbReference>
<dbReference type="InterPro" id="IPR025194">
    <property type="entry name" value="RodZ-like_C"/>
</dbReference>
<dbReference type="NCBIfam" id="NF008109">
    <property type="entry name" value="PRK10856.1"/>
    <property type="match status" value="1"/>
</dbReference>
<dbReference type="PANTHER" id="PTHR34475">
    <property type="match status" value="1"/>
</dbReference>
<dbReference type="PANTHER" id="PTHR34475:SF1">
    <property type="entry name" value="CYTOSKELETON PROTEIN RODZ"/>
    <property type="match status" value="1"/>
</dbReference>
<dbReference type="Pfam" id="PF13413">
    <property type="entry name" value="HTH_25"/>
    <property type="match status" value="1"/>
</dbReference>
<dbReference type="Pfam" id="PF13464">
    <property type="entry name" value="RodZ_C"/>
    <property type="match status" value="1"/>
</dbReference>
<dbReference type="SMART" id="SM00530">
    <property type="entry name" value="HTH_XRE"/>
    <property type="match status" value="1"/>
</dbReference>
<dbReference type="SUPFAM" id="SSF47413">
    <property type="entry name" value="lambda repressor-like DNA-binding domains"/>
    <property type="match status" value="1"/>
</dbReference>
<dbReference type="PROSITE" id="PS50943">
    <property type="entry name" value="HTH_CROC1"/>
    <property type="match status" value="1"/>
</dbReference>